<accession>Q81WD2</accession>
<accession>E9R7A8</accession>
<accession>E9R7A9</accession>
<accession>Q6HUH8</accession>
<accession>Q6KNR4</accession>
<organism>
    <name type="scientific">Bacillus anthracis</name>
    <dbReference type="NCBI Taxonomy" id="1392"/>
    <lineage>
        <taxon>Bacteria</taxon>
        <taxon>Bacillati</taxon>
        <taxon>Bacillota</taxon>
        <taxon>Bacilli</taxon>
        <taxon>Bacillales</taxon>
        <taxon>Bacillaceae</taxon>
        <taxon>Bacillus</taxon>
        <taxon>Bacillus cereus group</taxon>
    </lineage>
</organism>
<name>DIVIB_BACAN</name>
<dbReference type="EMBL" id="AE016879">
    <property type="protein sequence ID" value="AAP27773.1"/>
    <property type="molecule type" value="Genomic_DNA"/>
</dbReference>
<dbReference type="EMBL" id="AE017334">
    <property type="protein sequence ID" value="AAT33164.1"/>
    <property type="molecule type" value="Genomic_DNA"/>
</dbReference>
<dbReference type="EMBL" id="AE017225">
    <property type="protein sequence ID" value="AAT56061.1"/>
    <property type="molecule type" value="Genomic_DNA"/>
</dbReference>
<dbReference type="RefSeq" id="NP_846287.1">
    <property type="nucleotide sequence ID" value="NC_003997.3"/>
</dbReference>
<dbReference type="RefSeq" id="WP_000798226.1">
    <property type="nucleotide sequence ID" value="NZ_WXXJ01000026.1"/>
</dbReference>
<dbReference type="RefSeq" id="YP_030010.1">
    <property type="nucleotide sequence ID" value="NC_005945.1"/>
</dbReference>
<dbReference type="STRING" id="261594.GBAA_4047"/>
<dbReference type="DNASU" id="1086307"/>
<dbReference type="GeneID" id="45023737"/>
<dbReference type="KEGG" id="ban:BA_4047"/>
<dbReference type="KEGG" id="bar:GBAA_4047"/>
<dbReference type="KEGG" id="bat:BAS3759"/>
<dbReference type="PATRIC" id="fig|198094.11.peg.4018"/>
<dbReference type="eggNOG" id="COG1589">
    <property type="taxonomic scope" value="Bacteria"/>
</dbReference>
<dbReference type="HOGENOM" id="CLU_046278_2_1_9"/>
<dbReference type="OMA" id="YMNDGNE"/>
<dbReference type="OrthoDB" id="1819027at2"/>
<dbReference type="Proteomes" id="UP000000427">
    <property type="component" value="Chromosome"/>
</dbReference>
<dbReference type="Proteomes" id="UP000000594">
    <property type="component" value="Chromosome"/>
</dbReference>
<dbReference type="GO" id="GO:0032153">
    <property type="term" value="C:cell division site"/>
    <property type="evidence" value="ECO:0007669"/>
    <property type="project" value="UniProtKB-UniRule"/>
</dbReference>
<dbReference type="GO" id="GO:0005886">
    <property type="term" value="C:plasma membrane"/>
    <property type="evidence" value="ECO:0007669"/>
    <property type="project" value="UniProtKB-SubCell"/>
</dbReference>
<dbReference type="GO" id="GO:0043093">
    <property type="term" value="P:FtsZ-dependent cytokinesis"/>
    <property type="evidence" value="ECO:0007669"/>
    <property type="project" value="UniProtKB-UniRule"/>
</dbReference>
<dbReference type="Gene3D" id="3.40.50.10960">
    <property type="match status" value="1"/>
</dbReference>
<dbReference type="Gene3D" id="3.10.20.310">
    <property type="entry name" value="membrane protein fhac"/>
    <property type="match status" value="1"/>
</dbReference>
<dbReference type="HAMAP" id="MF_00912">
    <property type="entry name" value="DivIB"/>
    <property type="match status" value="1"/>
</dbReference>
<dbReference type="InterPro" id="IPR005548">
    <property type="entry name" value="Cell_div_FtsQ/DivIB_C"/>
</dbReference>
<dbReference type="InterPro" id="IPR026580">
    <property type="entry name" value="DivIB"/>
</dbReference>
<dbReference type="InterPro" id="IPR050487">
    <property type="entry name" value="FtsQ_DivIB"/>
</dbReference>
<dbReference type="InterPro" id="IPR034746">
    <property type="entry name" value="POTRA"/>
</dbReference>
<dbReference type="InterPro" id="IPR013685">
    <property type="entry name" value="POTRA_FtsQ_type"/>
</dbReference>
<dbReference type="PANTHER" id="PTHR37820">
    <property type="entry name" value="CELL DIVISION PROTEIN DIVIB"/>
    <property type="match status" value="1"/>
</dbReference>
<dbReference type="PANTHER" id="PTHR37820:SF1">
    <property type="entry name" value="CELL DIVISION PROTEIN FTSQ"/>
    <property type="match status" value="1"/>
</dbReference>
<dbReference type="Pfam" id="PF03799">
    <property type="entry name" value="FtsQ_DivIB_C"/>
    <property type="match status" value="1"/>
</dbReference>
<dbReference type="Pfam" id="PF08478">
    <property type="entry name" value="POTRA_1"/>
    <property type="match status" value="1"/>
</dbReference>
<dbReference type="PROSITE" id="PS51779">
    <property type="entry name" value="POTRA"/>
    <property type="match status" value="1"/>
</dbReference>
<reference key="1">
    <citation type="journal article" date="2003" name="Nature">
        <title>The genome sequence of Bacillus anthracis Ames and comparison to closely related bacteria.</title>
        <authorList>
            <person name="Read T.D."/>
            <person name="Peterson S.N."/>
            <person name="Tourasse N.J."/>
            <person name="Baillie L.W."/>
            <person name="Paulsen I.T."/>
            <person name="Nelson K.E."/>
            <person name="Tettelin H."/>
            <person name="Fouts D.E."/>
            <person name="Eisen J.A."/>
            <person name="Gill S.R."/>
            <person name="Holtzapple E.K."/>
            <person name="Okstad O.A."/>
            <person name="Helgason E."/>
            <person name="Rilstone J."/>
            <person name="Wu M."/>
            <person name="Kolonay J.F."/>
            <person name="Beanan M.J."/>
            <person name="Dodson R.J."/>
            <person name="Brinkac L.M."/>
            <person name="Gwinn M.L."/>
            <person name="DeBoy R.T."/>
            <person name="Madpu R."/>
            <person name="Daugherty S.C."/>
            <person name="Durkin A.S."/>
            <person name="Haft D.H."/>
            <person name="Nelson W.C."/>
            <person name="Peterson J.D."/>
            <person name="Pop M."/>
            <person name="Khouri H.M."/>
            <person name="Radune D."/>
            <person name="Benton J.L."/>
            <person name="Mahamoud Y."/>
            <person name="Jiang L."/>
            <person name="Hance I.R."/>
            <person name="Weidman J.F."/>
            <person name="Berry K.J."/>
            <person name="Plaut R.D."/>
            <person name="Wolf A.M."/>
            <person name="Watkins K.L."/>
            <person name="Nierman W.C."/>
            <person name="Hazen A."/>
            <person name="Cline R.T."/>
            <person name="Redmond C."/>
            <person name="Thwaite J.E."/>
            <person name="White O."/>
            <person name="Salzberg S.L."/>
            <person name="Thomason B."/>
            <person name="Friedlander A.M."/>
            <person name="Koehler T.M."/>
            <person name="Hanna P.C."/>
            <person name="Kolstoe A.-B."/>
            <person name="Fraser C.M."/>
        </authorList>
    </citation>
    <scope>NUCLEOTIDE SEQUENCE [LARGE SCALE GENOMIC DNA]</scope>
    <source>
        <strain>Ames / isolate Porton</strain>
    </source>
</reference>
<reference key="2">
    <citation type="submission" date="2004-01" db="EMBL/GenBank/DDBJ databases">
        <title>Complete genome sequence of Bacillus anthracis Sterne.</title>
        <authorList>
            <person name="Brettin T.S."/>
            <person name="Bruce D."/>
            <person name="Challacombe J.F."/>
            <person name="Gilna P."/>
            <person name="Han C."/>
            <person name="Hill K."/>
            <person name="Hitchcock P."/>
            <person name="Jackson P."/>
            <person name="Keim P."/>
            <person name="Longmire J."/>
            <person name="Lucas S."/>
            <person name="Okinaka R."/>
            <person name="Richardson P."/>
            <person name="Rubin E."/>
            <person name="Tice H."/>
        </authorList>
    </citation>
    <scope>NUCLEOTIDE SEQUENCE [LARGE SCALE GENOMIC DNA]</scope>
    <source>
        <strain>Sterne</strain>
    </source>
</reference>
<reference key="3">
    <citation type="journal article" date="2009" name="J. Bacteriol.">
        <title>The complete genome sequence of Bacillus anthracis Ames 'Ancestor'.</title>
        <authorList>
            <person name="Ravel J."/>
            <person name="Jiang L."/>
            <person name="Stanley S.T."/>
            <person name="Wilson M.R."/>
            <person name="Decker R.S."/>
            <person name="Read T.D."/>
            <person name="Worsham P."/>
            <person name="Keim P.S."/>
            <person name="Salzberg S.L."/>
            <person name="Fraser-Liggett C.M."/>
            <person name="Rasko D.A."/>
        </authorList>
    </citation>
    <scope>NUCLEOTIDE SEQUENCE [LARGE SCALE GENOMIC DNA]</scope>
    <source>
        <strain>Ames ancestor</strain>
    </source>
</reference>
<protein>
    <recommendedName>
        <fullName evidence="1">Cell division protein DivIB</fullName>
    </recommendedName>
</protein>
<keyword id="KW-0131">Cell cycle</keyword>
<keyword id="KW-0132">Cell division</keyword>
<keyword id="KW-1003">Cell membrane</keyword>
<keyword id="KW-0472">Membrane</keyword>
<keyword id="KW-1185">Reference proteome</keyword>
<keyword id="KW-0812">Transmembrane</keyword>
<keyword id="KW-1133">Transmembrane helix</keyword>
<gene>
    <name evidence="1" type="primary">divIB</name>
    <name type="ordered locus">BA_4047</name>
    <name type="ordered locus">GBAA_4047</name>
    <name type="ordered locus">BAS3759</name>
</gene>
<feature type="chain" id="PRO_0000414756" description="Cell division protein DivIB">
    <location>
        <begin position="1"/>
        <end position="265"/>
    </location>
</feature>
<feature type="topological domain" description="Cytoplasmic" evidence="1">
    <location>
        <begin position="1"/>
        <end position="30"/>
    </location>
</feature>
<feature type="transmembrane region" description="Helical" evidence="1">
    <location>
        <begin position="31"/>
        <end position="51"/>
    </location>
</feature>
<feature type="topological domain" description="Extracellular" evidence="1">
    <location>
        <begin position="52"/>
        <end position="265"/>
    </location>
</feature>
<feature type="domain" description="POTRA" evidence="2">
    <location>
        <begin position="53"/>
        <end position="121"/>
    </location>
</feature>
<sequence length="265" mass="30722">MKNSKVIKLQDRVPKLKNQQKKKKKNVNHRLILYISILFLLVLFLIYFRSPLSNIKKISVFGNHYMTDEQVMKESGVTYDTSYFRVTAHKAEENLTKRKEIKAVNVKKRFPNKIDVHIEEYLTIGYINKDGKLQPLLENGKTLDVLPNGKLPVAAPIFEPFKEEKMKELIAELEKLTPTILRSISEIRYSPTNANEDHLTLYMNEGYEVSTTIQNFAKRMETYPLILKTIEPGKKVLIDLEVGAYTKELGAEEKKNRMIVFNTLS</sequence>
<evidence type="ECO:0000255" key="1">
    <source>
        <dbReference type="HAMAP-Rule" id="MF_00912"/>
    </source>
</evidence>
<evidence type="ECO:0000255" key="2">
    <source>
        <dbReference type="PROSITE-ProRule" id="PRU01115"/>
    </source>
</evidence>
<comment type="function">
    <text evidence="1">Cell division protein that may be involved in stabilizing or promoting the assembly of the division complex.</text>
</comment>
<comment type="subcellular location">
    <subcellularLocation>
        <location evidence="1">Cell membrane</location>
        <topology evidence="1">Single-pass type II membrane protein</topology>
    </subcellularLocation>
    <text evidence="1">Localizes to the division septum.</text>
</comment>
<comment type="similarity">
    <text evidence="1">Belongs to the FtsQ/DivIB family. DivIB subfamily.</text>
</comment>
<proteinExistence type="inferred from homology"/>